<gene>
    <name type="ORF">SPBC12C2.04</name>
</gene>
<dbReference type="EMBL" id="CU329671">
    <property type="protein sequence ID" value="CAA90817.1"/>
    <property type="molecule type" value="Genomic_DNA"/>
</dbReference>
<dbReference type="PIR" id="T39377">
    <property type="entry name" value="T39377"/>
</dbReference>
<dbReference type="RefSeq" id="NP_596018.1">
    <property type="nucleotide sequence ID" value="NM_001021926.2"/>
</dbReference>
<dbReference type="SMR" id="Q09745"/>
<dbReference type="BioGRID" id="276366">
    <property type="interactions" value="20"/>
</dbReference>
<dbReference type="STRING" id="284812.Q09745"/>
<dbReference type="iPTMnet" id="Q09745"/>
<dbReference type="PaxDb" id="4896-SPBC12C2.04.1"/>
<dbReference type="EnsemblFungi" id="SPBC12C2.04.1">
    <property type="protein sequence ID" value="SPBC12C2.04.1:pep"/>
    <property type="gene ID" value="SPBC12C2.04"/>
</dbReference>
<dbReference type="KEGG" id="spo:2539816"/>
<dbReference type="PomBase" id="SPBC12C2.04"/>
<dbReference type="VEuPathDB" id="FungiDB:SPBC12C2.04"/>
<dbReference type="eggNOG" id="ENOG502QUVQ">
    <property type="taxonomic scope" value="Eukaryota"/>
</dbReference>
<dbReference type="HOGENOM" id="CLU_039338_0_0_1"/>
<dbReference type="InParanoid" id="Q09745"/>
<dbReference type="OMA" id="CTIARYN"/>
<dbReference type="PhylomeDB" id="Q09745"/>
<dbReference type="PRO" id="PR:Q09745"/>
<dbReference type="Proteomes" id="UP000002485">
    <property type="component" value="Chromosome II"/>
</dbReference>
<dbReference type="GO" id="GO:0005829">
    <property type="term" value="C:cytosol"/>
    <property type="evidence" value="ECO:0007005"/>
    <property type="project" value="PomBase"/>
</dbReference>
<dbReference type="GO" id="GO:0005634">
    <property type="term" value="C:nucleus"/>
    <property type="evidence" value="ECO:0007005"/>
    <property type="project" value="PomBase"/>
</dbReference>
<dbReference type="GO" id="GO:0000166">
    <property type="term" value="F:nucleotide binding"/>
    <property type="evidence" value="ECO:0007669"/>
    <property type="project" value="InterPro"/>
</dbReference>
<dbReference type="FunFam" id="3.30.360.10:FF:000103">
    <property type="entry name" value="Uncharacterized protein C12C2.04"/>
    <property type="match status" value="1"/>
</dbReference>
<dbReference type="Gene3D" id="3.30.360.10">
    <property type="entry name" value="Dihydrodipicolinate Reductase, domain 2"/>
    <property type="match status" value="1"/>
</dbReference>
<dbReference type="InterPro" id="IPR000683">
    <property type="entry name" value="Gfo/Idh/MocA-like_OxRdtase_N"/>
</dbReference>
<dbReference type="InterPro" id="IPR052515">
    <property type="entry name" value="Gfo/Idh/MocA_Oxidoreductase"/>
</dbReference>
<dbReference type="InterPro" id="IPR013944">
    <property type="entry name" value="OxRdtase_put_C"/>
</dbReference>
<dbReference type="PANTHER" id="PTHR43249:SF1">
    <property type="entry name" value="D-GLUCOSIDE 3-DEHYDROGENASE"/>
    <property type="match status" value="1"/>
</dbReference>
<dbReference type="PANTHER" id="PTHR43249">
    <property type="entry name" value="UDP-N-ACETYL-2-AMINO-2-DEOXY-D-GLUCURONATE OXIDASE"/>
    <property type="match status" value="1"/>
</dbReference>
<dbReference type="Pfam" id="PF01408">
    <property type="entry name" value="GFO_IDH_MocA"/>
    <property type="match status" value="1"/>
</dbReference>
<dbReference type="Pfam" id="PF08635">
    <property type="entry name" value="ox_reductase_C"/>
    <property type="match status" value="1"/>
</dbReference>
<dbReference type="SUPFAM" id="SSF55347">
    <property type="entry name" value="Glyceraldehyde-3-phosphate dehydrogenase-like, C-terminal domain"/>
    <property type="match status" value="1"/>
</dbReference>
<name>YB64_SCHPO</name>
<sequence>MTALSTNSSSGGIFKIAIVGAGGINFGTPEGPWNNAQRVEKVLGKSLRVTALINPLINESERVLKSKCASDVAFAYENTKTYVSVTEYLEYLDSHPEDVPSAYLIGIPPDFHGCTTPGMDMELEILRKYPNAALFIEKPITSAPVQGAFNLVHELEKYHAIISIGYMFRYLKIVQAAKKYVADNNLNIACTIARYNSAYEHNNKLFWWYMSKSGGPVVEQATHFCDLSIYFGGDVDTSTVKVNRVNWYDPCGKLAKVPVDEESIPKEERIPRFTAASWKYKSGAVGILAHSIILQGTNYDTCLELQADGHYVRMVDFYGQPRLYIRSPEADSERIINFPEDDPYYNEFDAFLGVVQGRYPPSRILSKFDDGAKTYELTKIITNN</sequence>
<evidence type="ECO:0000305" key="1"/>
<keyword id="KW-1185">Reference proteome</keyword>
<proteinExistence type="predicted"/>
<comment type="similarity">
    <text evidence="1">To S.pombe SpAC2E11.17.</text>
</comment>
<protein>
    <recommendedName>
        <fullName>Uncharacterized protein C12C2.04</fullName>
    </recommendedName>
</protein>
<organism>
    <name type="scientific">Schizosaccharomyces pombe (strain 972 / ATCC 24843)</name>
    <name type="common">Fission yeast</name>
    <dbReference type="NCBI Taxonomy" id="284812"/>
    <lineage>
        <taxon>Eukaryota</taxon>
        <taxon>Fungi</taxon>
        <taxon>Dikarya</taxon>
        <taxon>Ascomycota</taxon>
        <taxon>Taphrinomycotina</taxon>
        <taxon>Schizosaccharomycetes</taxon>
        <taxon>Schizosaccharomycetales</taxon>
        <taxon>Schizosaccharomycetaceae</taxon>
        <taxon>Schizosaccharomyces</taxon>
    </lineage>
</organism>
<reference key="1">
    <citation type="journal article" date="2002" name="Nature">
        <title>The genome sequence of Schizosaccharomyces pombe.</title>
        <authorList>
            <person name="Wood V."/>
            <person name="Gwilliam R."/>
            <person name="Rajandream M.A."/>
            <person name="Lyne M.H."/>
            <person name="Lyne R."/>
            <person name="Stewart A."/>
            <person name="Sgouros J.G."/>
            <person name="Peat N."/>
            <person name="Hayles J."/>
            <person name="Baker S.G."/>
            <person name="Basham D."/>
            <person name="Bowman S."/>
            <person name="Brooks K."/>
            <person name="Brown D."/>
            <person name="Brown S."/>
            <person name="Chillingworth T."/>
            <person name="Churcher C.M."/>
            <person name="Collins M."/>
            <person name="Connor R."/>
            <person name="Cronin A."/>
            <person name="Davis P."/>
            <person name="Feltwell T."/>
            <person name="Fraser A."/>
            <person name="Gentles S."/>
            <person name="Goble A."/>
            <person name="Hamlin N."/>
            <person name="Harris D.E."/>
            <person name="Hidalgo J."/>
            <person name="Hodgson G."/>
            <person name="Holroyd S."/>
            <person name="Hornsby T."/>
            <person name="Howarth S."/>
            <person name="Huckle E.J."/>
            <person name="Hunt S."/>
            <person name="Jagels K."/>
            <person name="James K.D."/>
            <person name="Jones L."/>
            <person name="Jones M."/>
            <person name="Leather S."/>
            <person name="McDonald S."/>
            <person name="McLean J."/>
            <person name="Mooney P."/>
            <person name="Moule S."/>
            <person name="Mungall K.L."/>
            <person name="Murphy L.D."/>
            <person name="Niblett D."/>
            <person name="Odell C."/>
            <person name="Oliver K."/>
            <person name="O'Neil S."/>
            <person name="Pearson D."/>
            <person name="Quail M.A."/>
            <person name="Rabbinowitsch E."/>
            <person name="Rutherford K.M."/>
            <person name="Rutter S."/>
            <person name="Saunders D."/>
            <person name="Seeger K."/>
            <person name="Sharp S."/>
            <person name="Skelton J."/>
            <person name="Simmonds M.N."/>
            <person name="Squares R."/>
            <person name="Squares S."/>
            <person name="Stevens K."/>
            <person name="Taylor K."/>
            <person name="Taylor R.G."/>
            <person name="Tivey A."/>
            <person name="Walsh S.V."/>
            <person name="Warren T."/>
            <person name="Whitehead S."/>
            <person name="Woodward J.R."/>
            <person name="Volckaert G."/>
            <person name="Aert R."/>
            <person name="Robben J."/>
            <person name="Grymonprez B."/>
            <person name="Weltjens I."/>
            <person name="Vanstreels E."/>
            <person name="Rieger M."/>
            <person name="Schaefer M."/>
            <person name="Mueller-Auer S."/>
            <person name="Gabel C."/>
            <person name="Fuchs M."/>
            <person name="Duesterhoeft A."/>
            <person name="Fritzc C."/>
            <person name="Holzer E."/>
            <person name="Moestl D."/>
            <person name="Hilbert H."/>
            <person name="Borzym K."/>
            <person name="Langer I."/>
            <person name="Beck A."/>
            <person name="Lehrach H."/>
            <person name="Reinhardt R."/>
            <person name="Pohl T.M."/>
            <person name="Eger P."/>
            <person name="Zimmermann W."/>
            <person name="Wedler H."/>
            <person name="Wambutt R."/>
            <person name="Purnelle B."/>
            <person name="Goffeau A."/>
            <person name="Cadieu E."/>
            <person name="Dreano S."/>
            <person name="Gloux S."/>
            <person name="Lelaure V."/>
            <person name="Mottier S."/>
            <person name="Galibert F."/>
            <person name="Aves S.J."/>
            <person name="Xiang Z."/>
            <person name="Hunt C."/>
            <person name="Moore K."/>
            <person name="Hurst S.M."/>
            <person name="Lucas M."/>
            <person name="Rochet M."/>
            <person name="Gaillardin C."/>
            <person name="Tallada V.A."/>
            <person name="Garzon A."/>
            <person name="Thode G."/>
            <person name="Daga R.R."/>
            <person name="Cruzado L."/>
            <person name="Jimenez J."/>
            <person name="Sanchez M."/>
            <person name="del Rey F."/>
            <person name="Benito J."/>
            <person name="Dominguez A."/>
            <person name="Revuelta J.L."/>
            <person name="Moreno S."/>
            <person name="Armstrong J."/>
            <person name="Forsburg S.L."/>
            <person name="Cerutti L."/>
            <person name="Lowe T."/>
            <person name="McCombie W.R."/>
            <person name="Paulsen I."/>
            <person name="Potashkin J."/>
            <person name="Shpakovski G.V."/>
            <person name="Ussery D."/>
            <person name="Barrell B.G."/>
            <person name="Nurse P."/>
        </authorList>
    </citation>
    <scope>NUCLEOTIDE SEQUENCE [LARGE SCALE GENOMIC DNA]</scope>
    <source>
        <strain>972 / ATCC 24843</strain>
    </source>
</reference>
<feature type="chain" id="PRO_0000116504" description="Uncharacterized protein C12C2.04">
    <location>
        <begin position="1"/>
        <end position="384"/>
    </location>
</feature>
<accession>Q09745</accession>